<accession>A3PDH3</accession>
<protein>
    <recommendedName>
        <fullName evidence="1">Bifunctional protein FolD</fullName>
    </recommendedName>
    <domain>
        <recommendedName>
            <fullName evidence="1">Methylenetetrahydrofolate dehydrogenase</fullName>
            <ecNumber evidence="1">1.5.1.5</ecNumber>
        </recommendedName>
    </domain>
    <domain>
        <recommendedName>
            <fullName evidence="1">Methenyltetrahydrofolate cyclohydrolase</fullName>
            <ecNumber evidence="1">3.5.4.9</ecNumber>
        </recommendedName>
    </domain>
</protein>
<feature type="chain" id="PRO_0000305862" description="Bifunctional protein FolD">
    <location>
        <begin position="1"/>
        <end position="298"/>
    </location>
</feature>
<feature type="binding site" evidence="1">
    <location>
        <begin position="165"/>
        <end position="167"/>
    </location>
    <ligand>
        <name>NADP(+)</name>
        <dbReference type="ChEBI" id="CHEBI:58349"/>
    </ligand>
</feature>
<feature type="binding site" evidence="1">
    <location>
        <position position="190"/>
    </location>
    <ligand>
        <name>NADP(+)</name>
        <dbReference type="ChEBI" id="CHEBI:58349"/>
    </ligand>
</feature>
<feature type="binding site" evidence="1">
    <location>
        <position position="231"/>
    </location>
    <ligand>
        <name>NADP(+)</name>
        <dbReference type="ChEBI" id="CHEBI:58349"/>
    </ligand>
</feature>
<evidence type="ECO:0000255" key="1">
    <source>
        <dbReference type="HAMAP-Rule" id="MF_01576"/>
    </source>
</evidence>
<sequence>MSLKLDGKKLSLEIEERLNEYISSNKEIAKRAPGLAVIRIGEDPASGVYVNNKEKACSRVGIKSFIFHLKDNIEQKEVEQLINKLNLDKNIDGMLLQLPIPKKFDEQKLISHINPSKDVDGLNEINIGKLVKNEPAMRSCTPAGIINLLRSQNIKIEGKKIVVVGRSLLVGKPLSLMLLNLNGTVTMTHSKTLNLNKVCREADILIAAAGKPNLIDSSFVKEGAIIIDVGIHRLKSSNKNQTRLCGDVLLEDVISKVFAYTPVPGGVGPMTVTMLLVNTIFSWQKQFGLSSNLNDLLP</sequence>
<comment type="function">
    <text evidence="1">Catalyzes the oxidation of 5,10-methylenetetrahydrofolate to 5,10-methenyltetrahydrofolate and then the hydrolysis of 5,10-methenyltetrahydrofolate to 10-formyltetrahydrofolate.</text>
</comment>
<comment type="catalytic activity">
    <reaction evidence="1">
        <text>(6R)-5,10-methylene-5,6,7,8-tetrahydrofolate + NADP(+) = (6R)-5,10-methenyltetrahydrofolate + NADPH</text>
        <dbReference type="Rhea" id="RHEA:22812"/>
        <dbReference type="ChEBI" id="CHEBI:15636"/>
        <dbReference type="ChEBI" id="CHEBI:57455"/>
        <dbReference type="ChEBI" id="CHEBI:57783"/>
        <dbReference type="ChEBI" id="CHEBI:58349"/>
        <dbReference type="EC" id="1.5.1.5"/>
    </reaction>
</comment>
<comment type="catalytic activity">
    <reaction evidence="1">
        <text>(6R)-5,10-methenyltetrahydrofolate + H2O = (6R)-10-formyltetrahydrofolate + H(+)</text>
        <dbReference type="Rhea" id="RHEA:23700"/>
        <dbReference type="ChEBI" id="CHEBI:15377"/>
        <dbReference type="ChEBI" id="CHEBI:15378"/>
        <dbReference type="ChEBI" id="CHEBI:57455"/>
        <dbReference type="ChEBI" id="CHEBI:195366"/>
        <dbReference type="EC" id="3.5.4.9"/>
    </reaction>
</comment>
<comment type="pathway">
    <text evidence="1">One-carbon metabolism; tetrahydrofolate interconversion.</text>
</comment>
<comment type="subunit">
    <text evidence="1">Homodimer.</text>
</comment>
<comment type="similarity">
    <text evidence="1">Belongs to the tetrahydrofolate dehydrogenase/cyclohydrolase family.</text>
</comment>
<organism>
    <name type="scientific">Prochlorococcus marinus (strain MIT 9301)</name>
    <dbReference type="NCBI Taxonomy" id="167546"/>
    <lineage>
        <taxon>Bacteria</taxon>
        <taxon>Bacillati</taxon>
        <taxon>Cyanobacteriota</taxon>
        <taxon>Cyanophyceae</taxon>
        <taxon>Synechococcales</taxon>
        <taxon>Prochlorococcaceae</taxon>
        <taxon>Prochlorococcus</taxon>
    </lineage>
</organism>
<gene>
    <name evidence="1" type="primary">folD</name>
    <name type="ordered locus">P9301_11751</name>
</gene>
<dbReference type="EC" id="1.5.1.5" evidence="1"/>
<dbReference type="EC" id="3.5.4.9" evidence="1"/>
<dbReference type="EMBL" id="CP000576">
    <property type="protein sequence ID" value="ABO17798.1"/>
    <property type="molecule type" value="Genomic_DNA"/>
</dbReference>
<dbReference type="RefSeq" id="WP_011863126.1">
    <property type="nucleotide sequence ID" value="NC_009091.1"/>
</dbReference>
<dbReference type="SMR" id="A3PDH3"/>
<dbReference type="STRING" id="167546.P9301_11751"/>
<dbReference type="KEGG" id="pmg:P9301_11751"/>
<dbReference type="eggNOG" id="COG0190">
    <property type="taxonomic scope" value="Bacteria"/>
</dbReference>
<dbReference type="HOGENOM" id="CLU_034045_2_1_3"/>
<dbReference type="OrthoDB" id="9803580at2"/>
<dbReference type="UniPathway" id="UPA00193"/>
<dbReference type="Proteomes" id="UP000001430">
    <property type="component" value="Chromosome"/>
</dbReference>
<dbReference type="GO" id="GO:0005829">
    <property type="term" value="C:cytosol"/>
    <property type="evidence" value="ECO:0007669"/>
    <property type="project" value="TreeGrafter"/>
</dbReference>
<dbReference type="GO" id="GO:0004477">
    <property type="term" value="F:methenyltetrahydrofolate cyclohydrolase activity"/>
    <property type="evidence" value="ECO:0007669"/>
    <property type="project" value="UniProtKB-UniRule"/>
</dbReference>
<dbReference type="GO" id="GO:0004488">
    <property type="term" value="F:methylenetetrahydrofolate dehydrogenase (NADP+) activity"/>
    <property type="evidence" value="ECO:0007669"/>
    <property type="project" value="UniProtKB-UniRule"/>
</dbReference>
<dbReference type="GO" id="GO:0000105">
    <property type="term" value="P:L-histidine biosynthetic process"/>
    <property type="evidence" value="ECO:0007669"/>
    <property type="project" value="UniProtKB-KW"/>
</dbReference>
<dbReference type="GO" id="GO:0009086">
    <property type="term" value="P:methionine biosynthetic process"/>
    <property type="evidence" value="ECO:0007669"/>
    <property type="project" value="UniProtKB-KW"/>
</dbReference>
<dbReference type="GO" id="GO:0006164">
    <property type="term" value="P:purine nucleotide biosynthetic process"/>
    <property type="evidence" value="ECO:0007669"/>
    <property type="project" value="UniProtKB-KW"/>
</dbReference>
<dbReference type="GO" id="GO:0035999">
    <property type="term" value="P:tetrahydrofolate interconversion"/>
    <property type="evidence" value="ECO:0007669"/>
    <property type="project" value="UniProtKB-UniRule"/>
</dbReference>
<dbReference type="CDD" id="cd01080">
    <property type="entry name" value="NAD_bind_m-THF_DH_Cyclohyd"/>
    <property type="match status" value="1"/>
</dbReference>
<dbReference type="FunFam" id="3.40.50.720:FF:000006">
    <property type="entry name" value="Bifunctional protein FolD"/>
    <property type="match status" value="1"/>
</dbReference>
<dbReference type="FunFam" id="3.40.50.10860:FF:000005">
    <property type="entry name" value="C-1-tetrahydrofolate synthase, cytoplasmic, putative"/>
    <property type="match status" value="1"/>
</dbReference>
<dbReference type="Gene3D" id="3.40.50.10860">
    <property type="entry name" value="Leucine Dehydrogenase, chain A, domain 1"/>
    <property type="match status" value="1"/>
</dbReference>
<dbReference type="Gene3D" id="3.40.50.720">
    <property type="entry name" value="NAD(P)-binding Rossmann-like Domain"/>
    <property type="match status" value="1"/>
</dbReference>
<dbReference type="HAMAP" id="MF_01576">
    <property type="entry name" value="THF_DHG_CYH"/>
    <property type="match status" value="1"/>
</dbReference>
<dbReference type="InterPro" id="IPR046346">
    <property type="entry name" value="Aminoacid_DH-like_N_sf"/>
</dbReference>
<dbReference type="InterPro" id="IPR036291">
    <property type="entry name" value="NAD(P)-bd_dom_sf"/>
</dbReference>
<dbReference type="InterPro" id="IPR000672">
    <property type="entry name" value="THF_DH/CycHdrlase"/>
</dbReference>
<dbReference type="InterPro" id="IPR020630">
    <property type="entry name" value="THF_DH/CycHdrlase_cat_dom"/>
</dbReference>
<dbReference type="InterPro" id="IPR020867">
    <property type="entry name" value="THF_DH/CycHdrlase_CS"/>
</dbReference>
<dbReference type="InterPro" id="IPR020631">
    <property type="entry name" value="THF_DH/CycHdrlase_NAD-bd_dom"/>
</dbReference>
<dbReference type="NCBIfam" id="NF010783">
    <property type="entry name" value="PRK14186.1"/>
    <property type="match status" value="1"/>
</dbReference>
<dbReference type="PANTHER" id="PTHR48099:SF5">
    <property type="entry name" value="C-1-TETRAHYDROFOLATE SYNTHASE, CYTOPLASMIC"/>
    <property type="match status" value="1"/>
</dbReference>
<dbReference type="PANTHER" id="PTHR48099">
    <property type="entry name" value="C-1-TETRAHYDROFOLATE SYNTHASE, CYTOPLASMIC-RELATED"/>
    <property type="match status" value="1"/>
</dbReference>
<dbReference type="Pfam" id="PF00763">
    <property type="entry name" value="THF_DHG_CYH"/>
    <property type="match status" value="1"/>
</dbReference>
<dbReference type="Pfam" id="PF02882">
    <property type="entry name" value="THF_DHG_CYH_C"/>
    <property type="match status" value="1"/>
</dbReference>
<dbReference type="PRINTS" id="PR00085">
    <property type="entry name" value="THFDHDRGNASE"/>
</dbReference>
<dbReference type="SUPFAM" id="SSF53223">
    <property type="entry name" value="Aminoacid dehydrogenase-like, N-terminal domain"/>
    <property type="match status" value="1"/>
</dbReference>
<dbReference type="SUPFAM" id="SSF51735">
    <property type="entry name" value="NAD(P)-binding Rossmann-fold domains"/>
    <property type="match status" value="1"/>
</dbReference>
<dbReference type="PROSITE" id="PS00767">
    <property type="entry name" value="THF_DHG_CYH_2"/>
    <property type="match status" value="1"/>
</dbReference>
<proteinExistence type="inferred from homology"/>
<keyword id="KW-0028">Amino-acid biosynthesis</keyword>
<keyword id="KW-0368">Histidine biosynthesis</keyword>
<keyword id="KW-0378">Hydrolase</keyword>
<keyword id="KW-0486">Methionine biosynthesis</keyword>
<keyword id="KW-0511">Multifunctional enzyme</keyword>
<keyword id="KW-0521">NADP</keyword>
<keyword id="KW-0554">One-carbon metabolism</keyword>
<keyword id="KW-0560">Oxidoreductase</keyword>
<keyword id="KW-0658">Purine biosynthesis</keyword>
<keyword id="KW-1185">Reference proteome</keyword>
<name>FOLD_PROM0</name>
<reference key="1">
    <citation type="journal article" date="2007" name="PLoS Genet.">
        <title>Patterns and implications of gene gain and loss in the evolution of Prochlorococcus.</title>
        <authorList>
            <person name="Kettler G.C."/>
            <person name="Martiny A.C."/>
            <person name="Huang K."/>
            <person name="Zucker J."/>
            <person name="Coleman M.L."/>
            <person name="Rodrigue S."/>
            <person name="Chen F."/>
            <person name="Lapidus A."/>
            <person name="Ferriera S."/>
            <person name="Johnson J."/>
            <person name="Steglich C."/>
            <person name="Church G.M."/>
            <person name="Richardson P."/>
            <person name="Chisholm S.W."/>
        </authorList>
    </citation>
    <scope>NUCLEOTIDE SEQUENCE [LARGE SCALE GENOMIC DNA]</scope>
    <source>
        <strain>MIT 9301</strain>
    </source>
</reference>